<keyword id="KW-0067">ATP-binding</keyword>
<keyword id="KW-0093">Biotin biosynthesis</keyword>
<keyword id="KW-0963">Cytoplasm</keyword>
<keyword id="KW-0436">Ligase</keyword>
<keyword id="KW-0460">Magnesium</keyword>
<keyword id="KW-0479">Metal-binding</keyword>
<keyword id="KW-0547">Nucleotide-binding</keyword>
<name>BIOD_FRATO</name>
<feature type="chain" id="PRO_0000302506" description="ATP-dependent dethiobiotin synthetase BioD">
    <location>
        <begin position="1"/>
        <end position="219"/>
    </location>
</feature>
<feature type="active site" evidence="1">
    <location>
        <position position="37"/>
    </location>
</feature>
<feature type="binding site" evidence="1">
    <location>
        <begin position="12"/>
        <end position="17"/>
    </location>
    <ligand>
        <name>ATP</name>
        <dbReference type="ChEBI" id="CHEBI:30616"/>
    </ligand>
</feature>
<feature type="binding site" evidence="1">
    <location>
        <position position="16"/>
    </location>
    <ligand>
        <name>Mg(2+)</name>
        <dbReference type="ChEBI" id="CHEBI:18420"/>
    </ligand>
</feature>
<feature type="binding site" evidence="1">
    <location>
        <position position="41"/>
    </location>
    <ligand>
        <name>substrate</name>
    </ligand>
</feature>
<feature type="binding site" evidence="1">
    <location>
        <position position="52"/>
    </location>
    <ligand>
        <name>ATP</name>
        <dbReference type="ChEBI" id="CHEBI:30616"/>
    </ligand>
</feature>
<feature type="binding site" evidence="1">
    <location>
        <position position="52"/>
    </location>
    <ligand>
        <name>Mg(2+)</name>
        <dbReference type="ChEBI" id="CHEBI:18420"/>
    </ligand>
</feature>
<feature type="binding site" evidence="1">
    <location>
        <begin position="114"/>
        <end position="117"/>
    </location>
    <ligand>
        <name>ATP</name>
        <dbReference type="ChEBI" id="CHEBI:30616"/>
    </ligand>
</feature>
<feature type="binding site" evidence="1">
    <location>
        <position position="114"/>
    </location>
    <ligand>
        <name>Mg(2+)</name>
        <dbReference type="ChEBI" id="CHEBI:18420"/>
    </ligand>
</feature>
<feature type="binding site" evidence="1">
    <location>
        <begin position="174"/>
        <end position="175"/>
    </location>
    <ligand>
        <name>ATP</name>
        <dbReference type="ChEBI" id="CHEBI:30616"/>
    </ligand>
</feature>
<organism>
    <name type="scientific">Francisella tularensis subsp. holarctica (strain OSU18)</name>
    <dbReference type="NCBI Taxonomy" id="393011"/>
    <lineage>
        <taxon>Bacteria</taxon>
        <taxon>Pseudomonadati</taxon>
        <taxon>Pseudomonadota</taxon>
        <taxon>Gammaproteobacteria</taxon>
        <taxon>Thiotrichales</taxon>
        <taxon>Francisellaceae</taxon>
        <taxon>Francisella</taxon>
    </lineage>
</organism>
<accession>Q0BLD2</accession>
<protein>
    <recommendedName>
        <fullName evidence="1">ATP-dependent dethiobiotin synthetase BioD</fullName>
        <ecNumber evidence="1">6.3.3.3</ecNumber>
    </recommendedName>
    <alternativeName>
        <fullName evidence="1">DTB synthetase</fullName>
        <shortName evidence="1">DTBS</shortName>
    </alternativeName>
    <alternativeName>
        <fullName evidence="1">Dethiobiotin synthase</fullName>
    </alternativeName>
</protein>
<dbReference type="EC" id="6.3.3.3" evidence="1"/>
<dbReference type="EMBL" id="CP000437">
    <property type="protein sequence ID" value="ABI83102.1"/>
    <property type="molecule type" value="Genomic_DNA"/>
</dbReference>
<dbReference type="RefSeq" id="WP_003016414.1">
    <property type="nucleotide sequence ID" value="NC_017463.1"/>
</dbReference>
<dbReference type="SMR" id="Q0BLD2"/>
<dbReference type="KEGG" id="fth:FTH_1248"/>
<dbReference type="UniPathway" id="UPA00078">
    <property type="reaction ID" value="UER00161"/>
</dbReference>
<dbReference type="GO" id="GO:0005829">
    <property type="term" value="C:cytosol"/>
    <property type="evidence" value="ECO:0007669"/>
    <property type="project" value="TreeGrafter"/>
</dbReference>
<dbReference type="GO" id="GO:0005524">
    <property type="term" value="F:ATP binding"/>
    <property type="evidence" value="ECO:0007669"/>
    <property type="project" value="UniProtKB-UniRule"/>
</dbReference>
<dbReference type="GO" id="GO:0004141">
    <property type="term" value="F:dethiobiotin synthase activity"/>
    <property type="evidence" value="ECO:0007669"/>
    <property type="project" value="UniProtKB-UniRule"/>
</dbReference>
<dbReference type="GO" id="GO:0000287">
    <property type="term" value="F:magnesium ion binding"/>
    <property type="evidence" value="ECO:0007669"/>
    <property type="project" value="UniProtKB-UniRule"/>
</dbReference>
<dbReference type="GO" id="GO:0009102">
    <property type="term" value="P:biotin biosynthetic process"/>
    <property type="evidence" value="ECO:0007669"/>
    <property type="project" value="UniProtKB-UniRule"/>
</dbReference>
<dbReference type="CDD" id="cd03109">
    <property type="entry name" value="DTBS"/>
    <property type="match status" value="1"/>
</dbReference>
<dbReference type="Gene3D" id="3.40.50.300">
    <property type="entry name" value="P-loop containing nucleotide triphosphate hydrolases"/>
    <property type="match status" value="1"/>
</dbReference>
<dbReference type="HAMAP" id="MF_00336">
    <property type="entry name" value="BioD"/>
    <property type="match status" value="1"/>
</dbReference>
<dbReference type="InterPro" id="IPR004472">
    <property type="entry name" value="DTB_synth_BioD"/>
</dbReference>
<dbReference type="InterPro" id="IPR027417">
    <property type="entry name" value="P-loop_NTPase"/>
</dbReference>
<dbReference type="NCBIfam" id="TIGR00347">
    <property type="entry name" value="bioD"/>
    <property type="match status" value="1"/>
</dbReference>
<dbReference type="PANTHER" id="PTHR43210">
    <property type="entry name" value="DETHIOBIOTIN SYNTHETASE"/>
    <property type="match status" value="1"/>
</dbReference>
<dbReference type="PANTHER" id="PTHR43210:SF5">
    <property type="entry name" value="DETHIOBIOTIN SYNTHETASE"/>
    <property type="match status" value="1"/>
</dbReference>
<dbReference type="Pfam" id="PF13500">
    <property type="entry name" value="AAA_26"/>
    <property type="match status" value="1"/>
</dbReference>
<dbReference type="PIRSF" id="PIRSF006755">
    <property type="entry name" value="DTB_synth"/>
    <property type="match status" value="1"/>
</dbReference>
<dbReference type="SUPFAM" id="SSF52540">
    <property type="entry name" value="P-loop containing nucleoside triphosphate hydrolases"/>
    <property type="match status" value="1"/>
</dbReference>
<sequence length="219" mass="24502">MKKFFIIGTNTEVGKTYISTKLIEVCEHQNIKSLCLKPVASGQSQFSELCEDVESILNAYKHKFTAAEINLISFNQAVAPHIIAAKTKVDISIENLKQFIEDKYNQDLDILFIEGAGGLLTPYSDHTTQLDLIKALQIPVLLVSAIKVGCINHTLLTINELNRHNIKLAGWIANCNDSNIKYIDEQINTIEELSGYKCSAKISRNADYLDFIDLSKILI</sequence>
<comment type="function">
    <text evidence="1">Catalyzes a mechanistically unusual reaction, the ATP-dependent insertion of CO2 between the N7 and N8 nitrogen atoms of 7,8-diaminopelargonic acid (DAPA, also called 7,8-diammoniononanoate) to form a ureido ring.</text>
</comment>
<comment type="catalytic activity">
    <reaction evidence="1">
        <text>(7R,8S)-7,8-diammoniononanoate + CO2 + ATP = (4R,5S)-dethiobiotin + ADP + phosphate + 3 H(+)</text>
        <dbReference type="Rhea" id="RHEA:15805"/>
        <dbReference type="ChEBI" id="CHEBI:15378"/>
        <dbReference type="ChEBI" id="CHEBI:16526"/>
        <dbReference type="ChEBI" id="CHEBI:30616"/>
        <dbReference type="ChEBI" id="CHEBI:43474"/>
        <dbReference type="ChEBI" id="CHEBI:149469"/>
        <dbReference type="ChEBI" id="CHEBI:149473"/>
        <dbReference type="ChEBI" id="CHEBI:456216"/>
        <dbReference type="EC" id="6.3.3.3"/>
    </reaction>
</comment>
<comment type="cofactor">
    <cofactor evidence="1">
        <name>Mg(2+)</name>
        <dbReference type="ChEBI" id="CHEBI:18420"/>
    </cofactor>
</comment>
<comment type="pathway">
    <text evidence="1">Cofactor biosynthesis; biotin biosynthesis; biotin from 7,8-diaminononanoate: step 1/2.</text>
</comment>
<comment type="subunit">
    <text evidence="1">Homodimer.</text>
</comment>
<comment type="subcellular location">
    <subcellularLocation>
        <location evidence="1">Cytoplasm</location>
    </subcellularLocation>
</comment>
<comment type="similarity">
    <text evidence="1">Belongs to the dethiobiotin synthetase family.</text>
</comment>
<proteinExistence type="inferred from homology"/>
<evidence type="ECO:0000255" key="1">
    <source>
        <dbReference type="HAMAP-Rule" id="MF_00336"/>
    </source>
</evidence>
<reference key="1">
    <citation type="journal article" date="2006" name="J. Bacteriol.">
        <title>Chromosome rearrangement and diversification of Francisella tularensis revealed by the type B (OSU18) genome sequence.</title>
        <authorList>
            <person name="Petrosino J.F."/>
            <person name="Xiang Q."/>
            <person name="Karpathy S.E."/>
            <person name="Jiang H."/>
            <person name="Yerrapragada S."/>
            <person name="Liu Y."/>
            <person name="Gioia J."/>
            <person name="Hemphill L."/>
            <person name="Gonzalez A."/>
            <person name="Raghavan T.M."/>
            <person name="Uzman A."/>
            <person name="Fox G.E."/>
            <person name="Highlander S."/>
            <person name="Reichard M."/>
            <person name="Morton R.J."/>
            <person name="Clinkenbeard K.D."/>
            <person name="Weinstock G.M."/>
        </authorList>
    </citation>
    <scope>NUCLEOTIDE SEQUENCE [LARGE SCALE GENOMIC DNA]</scope>
    <source>
        <strain>OSU18</strain>
    </source>
</reference>
<gene>
    <name evidence="1" type="primary">bioD</name>
    <name type="ordered locus">FTH_1248</name>
</gene>